<organism>
    <name type="scientific">Pseudomonas putida (strain ATCC 700007 / DSM 6899 / JCM 31910 / BCRC 17059 / LMG 24140 / F1)</name>
    <dbReference type="NCBI Taxonomy" id="351746"/>
    <lineage>
        <taxon>Bacteria</taxon>
        <taxon>Pseudomonadati</taxon>
        <taxon>Pseudomonadota</taxon>
        <taxon>Gammaproteobacteria</taxon>
        <taxon>Pseudomonadales</taxon>
        <taxon>Pseudomonadaceae</taxon>
        <taxon>Pseudomonas</taxon>
    </lineage>
</organism>
<dbReference type="EC" id="2.8.1.-" evidence="1"/>
<dbReference type="EMBL" id="CP000712">
    <property type="protein sequence ID" value="ABQ80200.1"/>
    <property type="molecule type" value="Genomic_DNA"/>
</dbReference>
<dbReference type="SMR" id="A5W7U0"/>
<dbReference type="KEGG" id="ppf:Pput_4076"/>
<dbReference type="eggNOG" id="COG0037">
    <property type="taxonomic scope" value="Bacteria"/>
</dbReference>
<dbReference type="HOGENOM" id="CLU_026481_0_0_6"/>
<dbReference type="GO" id="GO:0005737">
    <property type="term" value="C:cytoplasm"/>
    <property type="evidence" value="ECO:0007669"/>
    <property type="project" value="UniProtKB-SubCell"/>
</dbReference>
<dbReference type="GO" id="GO:0051539">
    <property type="term" value="F:4 iron, 4 sulfur cluster binding"/>
    <property type="evidence" value="ECO:0007669"/>
    <property type="project" value="UniProtKB-UniRule"/>
</dbReference>
<dbReference type="GO" id="GO:0005524">
    <property type="term" value="F:ATP binding"/>
    <property type="evidence" value="ECO:0007669"/>
    <property type="project" value="UniProtKB-UniRule"/>
</dbReference>
<dbReference type="GO" id="GO:0000287">
    <property type="term" value="F:magnesium ion binding"/>
    <property type="evidence" value="ECO:0007669"/>
    <property type="project" value="UniProtKB-UniRule"/>
</dbReference>
<dbReference type="GO" id="GO:0016783">
    <property type="term" value="F:sulfurtransferase activity"/>
    <property type="evidence" value="ECO:0007669"/>
    <property type="project" value="UniProtKB-UniRule"/>
</dbReference>
<dbReference type="GO" id="GO:0000049">
    <property type="term" value="F:tRNA binding"/>
    <property type="evidence" value="ECO:0007669"/>
    <property type="project" value="UniProtKB-KW"/>
</dbReference>
<dbReference type="GO" id="GO:0034227">
    <property type="term" value="P:tRNA thio-modification"/>
    <property type="evidence" value="ECO:0007669"/>
    <property type="project" value="UniProtKB-UniRule"/>
</dbReference>
<dbReference type="CDD" id="cd24138">
    <property type="entry name" value="TtcA-like"/>
    <property type="match status" value="1"/>
</dbReference>
<dbReference type="Gene3D" id="3.40.50.620">
    <property type="entry name" value="HUPs"/>
    <property type="match status" value="1"/>
</dbReference>
<dbReference type="HAMAP" id="MF_01850">
    <property type="entry name" value="TtcA"/>
    <property type="match status" value="1"/>
</dbReference>
<dbReference type="InterPro" id="IPR014729">
    <property type="entry name" value="Rossmann-like_a/b/a_fold"/>
</dbReference>
<dbReference type="InterPro" id="IPR011063">
    <property type="entry name" value="TilS/TtcA_N"/>
</dbReference>
<dbReference type="InterPro" id="IPR012089">
    <property type="entry name" value="tRNA_Cyd_32_2_STrfase"/>
</dbReference>
<dbReference type="InterPro" id="IPR035107">
    <property type="entry name" value="tRNA_thiolation_TtcA_Ctu1"/>
</dbReference>
<dbReference type="NCBIfam" id="NF007972">
    <property type="entry name" value="PRK10696.1"/>
    <property type="match status" value="1"/>
</dbReference>
<dbReference type="PANTHER" id="PTHR43686:SF1">
    <property type="entry name" value="AMINOTRAN_5 DOMAIN-CONTAINING PROTEIN"/>
    <property type="match status" value="1"/>
</dbReference>
<dbReference type="PANTHER" id="PTHR43686">
    <property type="entry name" value="SULFURTRANSFERASE-RELATED"/>
    <property type="match status" value="1"/>
</dbReference>
<dbReference type="Pfam" id="PF01171">
    <property type="entry name" value="ATP_bind_3"/>
    <property type="match status" value="1"/>
</dbReference>
<dbReference type="PIRSF" id="PIRSF004976">
    <property type="entry name" value="ATPase_YdaO"/>
    <property type="match status" value="1"/>
</dbReference>
<dbReference type="SUPFAM" id="SSF52402">
    <property type="entry name" value="Adenine nucleotide alpha hydrolases-like"/>
    <property type="match status" value="1"/>
</dbReference>
<reference key="1">
    <citation type="submission" date="2007-05" db="EMBL/GenBank/DDBJ databases">
        <title>Complete sequence of Pseudomonas putida F1.</title>
        <authorList>
            <consortium name="US DOE Joint Genome Institute"/>
            <person name="Copeland A."/>
            <person name="Lucas S."/>
            <person name="Lapidus A."/>
            <person name="Barry K."/>
            <person name="Detter J.C."/>
            <person name="Glavina del Rio T."/>
            <person name="Hammon N."/>
            <person name="Israni S."/>
            <person name="Dalin E."/>
            <person name="Tice H."/>
            <person name="Pitluck S."/>
            <person name="Chain P."/>
            <person name="Malfatti S."/>
            <person name="Shin M."/>
            <person name="Vergez L."/>
            <person name="Schmutz J."/>
            <person name="Larimer F."/>
            <person name="Land M."/>
            <person name="Hauser L."/>
            <person name="Kyrpides N."/>
            <person name="Lykidis A."/>
            <person name="Parales R."/>
            <person name="Richardson P."/>
        </authorList>
    </citation>
    <scope>NUCLEOTIDE SEQUENCE [LARGE SCALE GENOMIC DNA]</scope>
    <source>
        <strain>ATCC 700007 / DSM 6899 / JCM 31910 / BCRC 17059 / LMG 24140 / F1</strain>
    </source>
</reference>
<feature type="chain" id="PRO_0000348798" description="tRNA-cytidine(32) 2-sulfurtransferase">
    <location>
        <begin position="1"/>
        <end position="274"/>
    </location>
</feature>
<feature type="short sequence motif" description="PP-loop motif" evidence="1">
    <location>
        <begin position="40"/>
        <end position="45"/>
    </location>
</feature>
<feature type="binding site" evidence="1">
    <location>
        <position position="115"/>
    </location>
    <ligand>
        <name>[4Fe-4S] cluster</name>
        <dbReference type="ChEBI" id="CHEBI:49883"/>
    </ligand>
</feature>
<feature type="binding site" evidence="1">
    <location>
        <position position="118"/>
    </location>
    <ligand>
        <name>[4Fe-4S] cluster</name>
        <dbReference type="ChEBI" id="CHEBI:49883"/>
    </ligand>
</feature>
<feature type="binding site" evidence="1">
    <location>
        <position position="206"/>
    </location>
    <ligand>
        <name>[4Fe-4S] cluster</name>
        <dbReference type="ChEBI" id="CHEBI:49883"/>
    </ligand>
</feature>
<comment type="function">
    <text evidence="1">Catalyzes the ATP-dependent 2-thiolation of cytidine in position 32 of tRNA, to form 2-thiocytidine (s(2)C32). The sulfur atoms are provided by the cysteine/cysteine desulfurase (IscS) system.</text>
</comment>
<comment type="catalytic activity">
    <reaction evidence="1">
        <text>cytidine(32) in tRNA + S-sulfanyl-L-cysteinyl-[cysteine desulfurase] + AH2 + ATP = 2-thiocytidine(32) in tRNA + L-cysteinyl-[cysteine desulfurase] + A + AMP + diphosphate + H(+)</text>
        <dbReference type="Rhea" id="RHEA:57048"/>
        <dbReference type="Rhea" id="RHEA-COMP:10288"/>
        <dbReference type="Rhea" id="RHEA-COMP:12157"/>
        <dbReference type="Rhea" id="RHEA-COMP:12158"/>
        <dbReference type="Rhea" id="RHEA-COMP:14821"/>
        <dbReference type="ChEBI" id="CHEBI:13193"/>
        <dbReference type="ChEBI" id="CHEBI:15378"/>
        <dbReference type="ChEBI" id="CHEBI:17499"/>
        <dbReference type="ChEBI" id="CHEBI:29950"/>
        <dbReference type="ChEBI" id="CHEBI:30616"/>
        <dbReference type="ChEBI" id="CHEBI:33019"/>
        <dbReference type="ChEBI" id="CHEBI:61963"/>
        <dbReference type="ChEBI" id="CHEBI:82748"/>
        <dbReference type="ChEBI" id="CHEBI:141453"/>
        <dbReference type="ChEBI" id="CHEBI:456215"/>
    </reaction>
    <physiologicalReaction direction="left-to-right" evidence="1">
        <dbReference type="Rhea" id="RHEA:57049"/>
    </physiologicalReaction>
</comment>
<comment type="cofactor">
    <cofactor evidence="1">
        <name>Mg(2+)</name>
        <dbReference type="ChEBI" id="CHEBI:18420"/>
    </cofactor>
</comment>
<comment type="cofactor">
    <cofactor evidence="1">
        <name>[4Fe-4S] cluster</name>
        <dbReference type="ChEBI" id="CHEBI:49883"/>
    </cofactor>
    <text evidence="1">Binds 1 [4Fe-4S] cluster per subunit. The cluster is chelated by three Cys residues, the fourth Fe has a free coordination site that may bind a sulfur atom transferred from the persulfide of IscS.</text>
</comment>
<comment type="pathway">
    <text evidence="1">tRNA modification.</text>
</comment>
<comment type="subunit">
    <text evidence="1">Homodimer.</text>
</comment>
<comment type="subcellular location">
    <subcellularLocation>
        <location evidence="1">Cytoplasm</location>
    </subcellularLocation>
</comment>
<comment type="miscellaneous">
    <text evidence="1">The thiolation reaction likely consists of two steps: a first activation step by ATP to form an adenylated intermediate of the target base of tRNA, and a second nucleophilic substitution step of the sulfur (S) atom supplied by the hydrosulfide attached to the Fe-S cluster.</text>
</comment>
<comment type="similarity">
    <text evidence="1">Belongs to the TtcA family.</text>
</comment>
<proteinExistence type="inferred from homology"/>
<gene>
    <name evidence="1" type="primary">ttcA</name>
    <name type="ordered locus">Pput_4076</name>
</gene>
<keyword id="KW-0004">4Fe-4S</keyword>
<keyword id="KW-0067">ATP-binding</keyword>
<keyword id="KW-0963">Cytoplasm</keyword>
<keyword id="KW-0408">Iron</keyword>
<keyword id="KW-0411">Iron-sulfur</keyword>
<keyword id="KW-0460">Magnesium</keyword>
<keyword id="KW-0479">Metal-binding</keyword>
<keyword id="KW-0547">Nucleotide-binding</keyword>
<keyword id="KW-0694">RNA-binding</keyword>
<keyword id="KW-0808">Transferase</keyword>
<keyword id="KW-0819">tRNA processing</keyword>
<keyword id="KW-0820">tRNA-binding</keyword>
<protein>
    <recommendedName>
        <fullName evidence="1">tRNA-cytidine(32) 2-sulfurtransferase</fullName>
        <ecNumber evidence="1">2.8.1.-</ecNumber>
    </recommendedName>
    <alternativeName>
        <fullName evidence="1">Two-thiocytidine biosynthesis protein A</fullName>
    </alternativeName>
    <alternativeName>
        <fullName evidence="1">tRNA 2-thiocytidine biosynthesis protein TtcA</fullName>
    </alternativeName>
</protein>
<sequence>MGTLSVNQNKLQKRLRRLAGEAITDYNMIEDGDKVMVCLSGGKDSYTMLDVLLHLQKVAPITFEIVAVNMDQKQPGFPEHVLPAYLKELGVEYHIVEKDTYSVVKELVPEGKTTCSLCSRLRRGTLYTFADEIGATKMALGHHRDDIVETFFLNMFFNGALKGMPPKLRADDGRNVVIRPLAYCSEKDIQAYSDMKAFPIIPCNLCGSQENLQRQVVKDMLVEWERKHPGRTESIFRALQNVAPSQLADRNLFDFTSLKIDENATPRFLDVLNI</sequence>
<accession>A5W7U0</accession>
<name>TTCA_PSEP1</name>
<evidence type="ECO:0000255" key="1">
    <source>
        <dbReference type="HAMAP-Rule" id="MF_01850"/>
    </source>
</evidence>